<dbReference type="EC" id="2.3.2.-"/>
<dbReference type="EMBL" id="CR761388">
    <property type="protein sequence ID" value="CAJ82171.1"/>
    <property type="molecule type" value="mRNA"/>
</dbReference>
<dbReference type="EMBL" id="BC123969">
    <property type="protein sequence ID" value="AAI23970.1"/>
    <property type="molecule type" value="mRNA"/>
</dbReference>
<dbReference type="RefSeq" id="NP_001017091.1">
    <property type="nucleotide sequence ID" value="NM_001017091.2"/>
</dbReference>
<dbReference type="SMR" id="Q28GH3"/>
<dbReference type="FunCoup" id="Q28GH3">
    <property type="interactions" value="4373"/>
</dbReference>
<dbReference type="STRING" id="8364.ENSXETP00000027042"/>
<dbReference type="PaxDb" id="8364-ENSXETP00000058805"/>
<dbReference type="DNASU" id="549845"/>
<dbReference type="GeneID" id="549845"/>
<dbReference type="KEGG" id="xtr:549845"/>
<dbReference type="AGR" id="Xenbase:XB-GENE-977709"/>
<dbReference type="CTD" id="10054"/>
<dbReference type="Xenbase" id="XB-GENE-977709">
    <property type="gene designation" value="uba2"/>
</dbReference>
<dbReference type="eggNOG" id="KOG2013">
    <property type="taxonomic scope" value="Eukaryota"/>
</dbReference>
<dbReference type="InParanoid" id="Q28GH3"/>
<dbReference type="OMA" id="TPSEHIH"/>
<dbReference type="OrthoDB" id="10255449at2759"/>
<dbReference type="Reactome" id="R-XTR-3065676">
    <property type="pathway name" value="SUMO is conjugated to E1 (UBA2:SAE1)"/>
</dbReference>
<dbReference type="Reactome" id="R-XTR-3065678">
    <property type="pathway name" value="SUMO is transferred from E1 to E2 (UBE2I, UBC9)"/>
</dbReference>
<dbReference type="UniPathway" id="UPA00886"/>
<dbReference type="Proteomes" id="UP000008143">
    <property type="component" value="Chromosome 4"/>
</dbReference>
<dbReference type="Bgee" id="ENSXETG00000002374">
    <property type="expression patterns" value="Expressed in egg cell and 17 other cell types or tissues"/>
</dbReference>
<dbReference type="GO" id="GO:0005737">
    <property type="term" value="C:cytoplasm"/>
    <property type="evidence" value="ECO:0007669"/>
    <property type="project" value="UniProtKB-SubCell"/>
</dbReference>
<dbReference type="GO" id="GO:0031510">
    <property type="term" value="C:SUMO activating enzyme complex"/>
    <property type="evidence" value="ECO:0000250"/>
    <property type="project" value="UniProtKB"/>
</dbReference>
<dbReference type="GO" id="GO:0005524">
    <property type="term" value="F:ATP binding"/>
    <property type="evidence" value="ECO:0007669"/>
    <property type="project" value="UniProtKB-KW"/>
</dbReference>
<dbReference type="GO" id="GO:0046872">
    <property type="term" value="F:metal ion binding"/>
    <property type="evidence" value="ECO:0007669"/>
    <property type="project" value="UniProtKB-KW"/>
</dbReference>
<dbReference type="GO" id="GO:0019948">
    <property type="term" value="F:SUMO activating enzyme activity"/>
    <property type="evidence" value="ECO:0000250"/>
    <property type="project" value="UniProtKB"/>
</dbReference>
<dbReference type="GO" id="GO:0016740">
    <property type="term" value="F:transferase activity"/>
    <property type="evidence" value="ECO:0007669"/>
    <property type="project" value="UniProtKB-KW"/>
</dbReference>
<dbReference type="GO" id="GO:0016925">
    <property type="term" value="P:protein sumoylation"/>
    <property type="evidence" value="ECO:0000250"/>
    <property type="project" value="UniProtKB"/>
</dbReference>
<dbReference type="CDD" id="cd01489">
    <property type="entry name" value="Uba2_SUMO"/>
    <property type="match status" value="1"/>
</dbReference>
<dbReference type="FunFam" id="1.10.10.520:FF:000002">
    <property type="entry name" value="SUMO-activating enzyme subunit 2"/>
    <property type="match status" value="1"/>
</dbReference>
<dbReference type="FunFam" id="3.10.290.20:FF:000002">
    <property type="entry name" value="SUMO-activating enzyme subunit 2"/>
    <property type="match status" value="1"/>
</dbReference>
<dbReference type="FunFam" id="3.40.50.720:FF:000618">
    <property type="entry name" value="SUMO-activating enzyme subunit 2"/>
    <property type="match status" value="1"/>
</dbReference>
<dbReference type="FunFam" id="3.50.50.80:FF:000002">
    <property type="entry name" value="SUMO-activating enzyme subunit 2"/>
    <property type="match status" value="1"/>
</dbReference>
<dbReference type="Gene3D" id="1.10.10.520">
    <property type="entry name" value="Ubiquitin activating enzymes (Uba3). Chain: B, domain 2"/>
    <property type="match status" value="1"/>
</dbReference>
<dbReference type="Gene3D" id="3.50.50.80">
    <property type="entry name" value="Ubiquitin-activating enzyme E1, inactive adenylation domain, subdomain 1"/>
    <property type="match status" value="1"/>
</dbReference>
<dbReference type="Gene3D" id="3.10.290.20">
    <property type="entry name" value="Ubiquitin-like 2 activating enzyme e1b. Chain: B, domain 3"/>
    <property type="match status" value="1"/>
</dbReference>
<dbReference type="InterPro" id="IPR045886">
    <property type="entry name" value="ThiF/MoeB/HesA"/>
</dbReference>
<dbReference type="InterPro" id="IPR000594">
    <property type="entry name" value="ThiF_NAD_FAD-bd"/>
</dbReference>
<dbReference type="InterPro" id="IPR028077">
    <property type="entry name" value="UAE_UbL_dom"/>
</dbReference>
<dbReference type="InterPro" id="IPR042449">
    <property type="entry name" value="Ub-E1_IAD_1"/>
</dbReference>
<dbReference type="InterPro" id="IPR023318">
    <property type="entry name" value="Ub_act_enz_dom_a_sf"/>
</dbReference>
<dbReference type="InterPro" id="IPR030661">
    <property type="entry name" value="Uba2"/>
</dbReference>
<dbReference type="InterPro" id="IPR032426">
    <property type="entry name" value="UBA2_C"/>
</dbReference>
<dbReference type="InterPro" id="IPR035985">
    <property type="entry name" value="Ubiquitin-activating_enz"/>
</dbReference>
<dbReference type="InterPro" id="IPR033127">
    <property type="entry name" value="UBQ-activ_enz_E1_Cys_AS"/>
</dbReference>
<dbReference type="PANTHER" id="PTHR10953:SF5">
    <property type="entry name" value="SUMO-ACTIVATING ENZYME SUBUNIT 2"/>
    <property type="match status" value="1"/>
</dbReference>
<dbReference type="PANTHER" id="PTHR10953">
    <property type="entry name" value="UBIQUITIN-ACTIVATING ENZYME E1"/>
    <property type="match status" value="1"/>
</dbReference>
<dbReference type="Pfam" id="PF00899">
    <property type="entry name" value="ThiF"/>
    <property type="match status" value="1"/>
</dbReference>
<dbReference type="Pfam" id="PF14732">
    <property type="entry name" value="UAE_UbL"/>
    <property type="match status" value="1"/>
</dbReference>
<dbReference type="Pfam" id="PF16195">
    <property type="entry name" value="UBA2_C"/>
    <property type="match status" value="1"/>
</dbReference>
<dbReference type="PIRSF" id="PIRSF039133">
    <property type="entry name" value="SUMO_E1B"/>
    <property type="match status" value="1"/>
</dbReference>
<dbReference type="SUPFAM" id="SSF69572">
    <property type="entry name" value="Activating enzymes of the ubiquitin-like proteins"/>
    <property type="match status" value="1"/>
</dbReference>
<dbReference type="PROSITE" id="PS00865">
    <property type="entry name" value="UBIQUITIN_ACTIVAT_2"/>
    <property type="match status" value="1"/>
</dbReference>
<protein>
    <recommendedName>
        <fullName>SUMO-activating enzyme subunit 2</fullName>
        <ecNumber>2.3.2.-</ecNumber>
    </recommendedName>
    <alternativeName>
        <fullName>Ubiquitin-like 1-activating enzyme E1B</fullName>
    </alternativeName>
    <alternativeName>
        <fullName>Ubiquitin-like modifier-activating enzyme 2</fullName>
    </alternativeName>
</protein>
<accession>Q28GH3</accession>
<feature type="chain" id="PRO_0000268875" description="SUMO-activating enzyme subunit 2">
    <location>
        <begin position="1"/>
        <end position="641"/>
    </location>
</feature>
<feature type="region of interest" description="Disordered" evidence="4">
    <location>
        <begin position="546"/>
        <end position="641"/>
    </location>
</feature>
<feature type="compositionally biased region" description="Polar residues" evidence="4">
    <location>
        <begin position="556"/>
        <end position="579"/>
    </location>
</feature>
<feature type="compositionally biased region" description="Acidic residues" evidence="4">
    <location>
        <begin position="582"/>
        <end position="594"/>
    </location>
</feature>
<feature type="compositionally biased region" description="Acidic residues" evidence="4">
    <location>
        <begin position="630"/>
        <end position="641"/>
    </location>
</feature>
<feature type="active site" description="Glycyl thioester intermediate" evidence="3">
    <location>
        <position position="173"/>
    </location>
</feature>
<feature type="binding site" evidence="1">
    <location>
        <begin position="24"/>
        <end position="29"/>
    </location>
    <ligand>
        <name>ATP</name>
        <dbReference type="ChEBI" id="CHEBI:30616"/>
    </ligand>
</feature>
<feature type="binding site" evidence="1">
    <location>
        <position position="48"/>
    </location>
    <ligand>
        <name>ATP</name>
        <dbReference type="ChEBI" id="CHEBI:30616"/>
    </ligand>
</feature>
<feature type="binding site" evidence="1">
    <location>
        <begin position="56"/>
        <end position="59"/>
    </location>
    <ligand>
        <name>ATP</name>
        <dbReference type="ChEBI" id="CHEBI:30616"/>
    </ligand>
</feature>
<feature type="binding site" evidence="1">
    <location>
        <position position="72"/>
    </location>
    <ligand>
        <name>ATP</name>
        <dbReference type="ChEBI" id="CHEBI:30616"/>
    </ligand>
</feature>
<feature type="binding site" evidence="1">
    <location>
        <begin position="95"/>
        <end position="96"/>
    </location>
    <ligand>
        <name>ATP</name>
        <dbReference type="ChEBI" id="CHEBI:30616"/>
    </ligand>
</feature>
<feature type="binding site" evidence="1">
    <location>
        <begin position="117"/>
        <end position="122"/>
    </location>
    <ligand>
        <name>ATP</name>
        <dbReference type="ChEBI" id="CHEBI:30616"/>
    </ligand>
</feature>
<feature type="binding site" evidence="1">
    <location>
        <position position="158"/>
    </location>
    <ligand>
        <name>Zn(2+)</name>
        <dbReference type="ChEBI" id="CHEBI:29105"/>
    </ligand>
</feature>
<feature type="binding site" evidence="1">
    <location>
        <position position="161"/>
    </location>
    <ligand>
        <name>Zn(2+)</name>
        <dbReference type="ChEBI" id="CHEBI:29105"/>
    </ligand>
</feature>
<feature type="binding site" evidence="1">
    <location>
        <position position="439"/>
    </location>
    <ligand>
        <name>Zn(2+)</name>
        <dbReference type="ChEBI" id="CHEBI:29105"/>
    </ligand>
</feature>
<feature type="binding site" evidence="1">
    <location>
        <position position="442"/>
    </location>
    <ligand>
        <name>Zn(2+)</name>
        <dbReference type="ChEBI" id="CHEBI:29105"/>
    </ligand>
</feature>
<feature type="cross-link" description="Glycyl lysine isopeptide (Lys-Gly) (interchain with G-Cter in SUMO)" evidence="1">
    <location>
        <position position="190"/>
    </location>
</feature>
<feature type="cross-link" description="Glycyl lysine isopeptide (Lys-Gly) (interchain with G-Cter in SUMO1)" evidence="1">
    <location>
        <position position="236"/>
    </location>
</feature>
<feature type="cross-link" description="Glycyl lysine isopeptide (Lys-Gly) (interchain with G-Cter in SUMO)" evidence="1">
    <location>
        <position position="257"/>
    </location>
</feature>
<feature type="cross-link" description="Glycyl lysine isopeptide (Lys-Gly) (interchain with G-Cter in SUMO)" evidence="1">
    <location>
        <position position="275"/>
    </location>
</feature>
<feature type="cross-link" description="Glycyl lysine isopeptide (Lys-Gly) (interchain with G-Cter in SUMO)" evidence="1">
    <location>
        <position position="610"/>
    </location>
</feature>
<feature type="cross-link" description="Glycyl lysine isopeptide (Lys-Gly) (interchain with G-Cter in SUMO)" evidence="1">
    <location>
        <position position="612"/>
    </location>
</feature>
<feature type="cross-link" description="Glycyl lysine isopeptide (Lys-Gly) (interchain with G-Cter in SUMO)" evidence="1">
    <location>
        <position position="623"/>
    </location>
</feature>
<sequence length="641" mass="70999">MAMIGALPKELAEAVSTSRLLVVGAGGIGCELLKNLVLTGFINLDVIDLDTIDVSNLNRQFLFQKKHVGRSKAQVAKESVLQFCPEANITAYHDSIMNPDYNVEFFKQFTMVMNALDNNAARNHVNRMCLAAGIPLIESGTAGYLGQVTVVKKGVTECYECQPKPTQKTFPGCTIRNTPSEPIHCIVWAKYLFNQLFGEEDADQEVAPDIADPEAAWDPTQAAERANASNVDGDIKRVSTKQWAKSTGYDPIKLFNKLFRDDIKYLLTMDRLWRKRKPPVPLEWSSLHNKENCSETQNESSLQGLKDQKVLDVTSCAQLFSKSVETLREQLREKGNGAELVWDKDDPPAMDFVTAAANLRMHIFSMNMKSRFDVKSMAGNIIPAIATTNAVISGLIVLEGLKILSGNTEQCRTVFLNKQPNPRKKLLVPCSLDPPNPSCYVCAIKPEVTVKLNVHKVTVQMLQDKILKEKFAMVAPDVQIEDGKGTILISSEAGETDANNNRKISEFGIRNSSQLQADDFLQDYTLMINILHSDEMEKDVDFEVVGDVPEKGPQKPSEQSVKNITNGSDDGAQPSTSKAQDQDDVLIVDSDEESPSSSNADINMDSASLKRKLPEEETISSTKRKRLEPPVEEDDDIIALD</sequence>
<organism>
    <name type="scientific">Xenopus tropicalis</name>
    <name type="common">Western clawed frog</name>
    <name type="synonym">Silurana tropicalis</name>
    <dbReference type="NCBI Taxonomy" id="8364"/>
    <lineage>
        <taxon>Eukaryota</taxon>
        <taxon>Metazoa</taxon>
        <taxon>Chordata</taxon>
        <taxon>Craniata</taxon>
        <taxon>Vertebrata</taxon>
        <taxon>Euteleostomi</taxon>
        <taxon>Amphibia</taxon>
        <taxon>Batrachia</taxon>
        <taxon>Anura</taxon>
        <taxon>Pipoidea</taxon>
        <taxon>Pipidae</taxon>
        <taxon>Xenopodinae</taxon>
        <taxon>Xenopus</taxon>
        <taxon>Silurana</taxon>
    </lineage>
</organism>
<reference key="1">
    <citation type="submission" date="2006-10" db="EMBL/GenBank/DDBJ databases">
        <authorList>
            <consortium name="Sanger Xenopus tropicalis EST/cDNA project"/>
        </authorList>
    </citation>
    <scope>NUCLEOTIDE SEQUENCE [LARGE SCALE MRNA]</scope>
    <source>
        <tissue>Egg</tissue>
    </source>
</reference>
<reference key="2">
    <citation type="submission" date="2006-06" db="EMBL/GenBank/DDBJ databases">
        <authorList>
            <consortium name="NIH - Xenopus Gene Collection (XGC) project"/>
        </authorList>
    </citation>
    <scope>NUCLEOTIDE SEQUENCE [LARGE SCALE MRNA]</scope>
    <source>
        <strain>N6</strain>
        <tissue>Spleen</tissue>
    </source>
</reference>
<gene>
    <name type="primary">uba2</name>
    <name type="synonym">sae2</name>
    <name type="synonym">uble1b</name>
    <name type="ORF">TEgg032e11.1</name>
</gene>
<name>SAE2_XENTR</name>
<comment type="function">
    <text evidence="2">The heterodimer acts as an E1 ligase for sumo1, sumo2, and sumo3. It mediates ATP-dependent activation of sumo proteins followed by formation of a thioester bond between a sumo protein and a conserved active site cysteine residue on uba2/sae2 (By similarity).</text>
</comment>
<comment type="pathway">
    <text>Protein modification; protein sumoylation.</text>
</comment>
<comment type="subunit">
    <text evidence="1">Heterodimer of sae1 and uba2/sae2. The heterodimer corresponds to the two domains that are encoded on a single polypeptide chain in ubiquitin-activating enzyme E1. Interacts with ube2i (By similarity).</text>
</comment>
<comment type="subcellular location">
    <subcellularLocation>
        <location evidence="1">Cytoplasm</location>
    </subcellularLocation>
    <subcellularLocation>
        <location evidence="1">Nucleus</location>
    </subcellularLocation>
    <text evidence="1">Shuttles between the cytoplasm and the nucleus, sumoylation is required either for nuclear translocation or nuclear retention.</text>
</comment>
<comment type="PTM">
    <text evidence="1">Sumoylated with SUMO1 and SUMO2/3 and by UBC9. Sumoylation at Lys-236 inhibits enzymatic activity. Sumoylation at the C-terminal lysine cluster plays an essential role in nuclear trafficking (By similarity).</text>
</comment>
<comment type="similarity">
    <text evidence="5">Belongs to the ubiquitin-activating E1 family.</text>
</comment>
<keyword id="KW-0067">ATP-binding</keyword>
<keyword id="KW-0963">Cytoplasm</keyword>
<keyword id="KW-1017">Isopeptide bond</keyword>
<keyword id="KW-0479">Metal-binding</keyword>
<keyword id="KW-0547">Nucleotide-binding</keyword>
<keyword id="KW-0539">Nucleus</keyword>
<keyword id="KW-1185">Reference proteome</keyword>
<keyword id="KW-0808">Transferase</keyword>
<keyword id="KW-0832">Ubl conjugation</keyword>
<keyword id="KW-0833">Ubl conjugation pathway</keyword>
<keyword id="KW-0862">Zinc</keyword>
<proteinExistence type="evidence at transcript level"/>
<evidence type="ECO:0000250" key="1"/>
<evidence type="ECO:0000250" key="2">
    <source>
        <dbReference type="UniProtKB" id="Q9UBT2"/>
    </source>
</evidence>
<evidence type="ECO:0000255" key="3">
    <source>
        <dbReference type="PROSITE-ProRule" id="PRU10132"/>
    </source>
</evidence>
<evidence type="ECO:0000256" key="4">
    <source>
        <dbReference type="SAM" id="MobiDB-lite"/>
    </source>
</evidence>
<evidence type="ECO:0000305" key="5"/>